<gene>
    <name type="primary">HTZ1</name>
    <name type="ORF">UMAG_00469</name>
</gene>
<dbReference type="EMBL" id="CM003140">
    <property type="protein sequence ID" value="KIS72047.1"/>
    <property type="molecule type" value="Genomic_DNA"/>
</dbReference>
<dbReference type="RefSeq" id="XP_011386331.1">
    <property type="nucleotide sequence ID" value="XM_011388029.1"/>
</dbReference>
<dbReference type="SMR" id="Q4PHE4"/>
<dbReference type="FunCoup" id="Q4PHE4">
    <property type="interactions" value="375"/>
</dbReference>
<dbReference type="STRING" id="237631.Q4PHE4"/>
<dbReference type="EnsemblFungi" id="KIS72047">
    <property type="protein sequence ID" value="KIS72047"/>
    <property type="gene ID" value="UMAG_00469"/>
</dbReference>
<dbReference type="GeneID" id="23561764"/>
<dbReference type="KEGG" id="uma:UMAG_00469"/>
<dbReference type="VEuPathDB" id="FungiDB:UMAG_00469"/>
<dbReference type="eggNOG" id="KOG1757">
    <property type="taxonomic scope" value="Eukaryota"/>
</dbReference>
<dbReference type="HOGENOM" id="CLU_062828_2_1_1"/>
<dbReference type="InParanoid" id="Q4PHE4"/>
<dbReference type="OMA" id="MNKKGAP"/>
<dbReference type="OrthoDB" id="9421954at2759"/>
<dbReference type="Proteomes" id="UP000000561">
    <property type="component" value="Chromosome 1"/>
</dbReference>
<dbReference type="GO" id="GO:0000791">
    <property type="term" value="C:euchromatin"/>
    <property type="evidence" value="ECO:0007669"/>
    <property type="project" value="EnsemblFungi"/>
</dbReference>
<dbReference type="GO" id="GO:0000786">
    <property type="term" value="C:nucleosome"/>
    <property type="evidence" value="ECO:0000318"/>
    <property type="project" value="GO_Central"/>
</dbReference>
<dbReference type="GO" id="GO:0005634">
    <property type="term" value="C:nucleus"/>
    <property type="evidence" value="ECO:0000318"/>
    <property type="project" value="GO_Central"/>
</dbReference>
<dbReference type="GO" id="GO:0031490">
    <property type="term" value="F:chromatin DNA binding"/>
    <property type="evidence" value="ECO:0007669"/>
    <property type="project" value="EnsemblFungi"/>
</dbReference>
<dbReference type="GO" id="GO:0042802">
    <property type="term" value="F:identical protein binding"/>
    <property type="evidence" value="ECO:0007669"/>
    <property type="project" value="EnsemblFungi"/>
</dbReference>
<dbReference type="GO" id="GO:0046982">
    <property type="term" value="F:protein heterodimerization activity"/>
    <property type="evidence" value="ECO:0007669"/>
    <property type="project" value="InterPro"/>
</dbReference>
<dbReference type="GO" id="GO:0000978">
    <property type="term" value="F:RNA polymerase II cis-regulatory region sequence-specific DNA binding"/>
    <property type="evidence" value="ECO:0007669"/>
    <property type="project" value="EnsemblFungi"/>
</dbReference>
<dbReference type="GO" id="GO:0030527">
    <property type="term" value="F:structural constituent of chromatin"/>
    <property type="evidence" value="ECO:0000318"/>
    <property type="project" value="GO_Central"/>
</dbReference>
<dbReference type="GO" id="GO:0140898">
    <property type="term" value="P:CENP-A eviction from euchromatin"/>
    <property type="evidence" value="ECO:0007669"/>
    <property type="project" value="EnsemblFungi"/>
</dbReference>
<dbReference type="GO" id="GO:0031507">
    <property type="term" value="P:heterochromatin formation"/>
    <property type="evidence" value="ECO:0000318"/>
    <property type="project" value="GO_Central"/>
</dbReference>
<dbReference type="GO" id="GO:0070481">
    <property type="term" value="P:nuclear-transcribed mRNA catabolic process, non-stop decay"/>
    <property type="evidence" value="ECO:0007669"/>
    <property type="project" value="EnsemblFungi"/>
</dbReference>
<dbReference type="GO" id="GO:0006357">
    <property type="term" value="P:regulation of transcription by RNA polymerase II"/>
    <property type="evidence" value="ECO:0007669"/>
    <property type="project" value="EnsemblFungi"/>
</dbReference>
<dbReference type="GO" id="GO:0030466">
    <property type="term" value="P:silent mating-type cassette heterochromatin formation"/>
    <property type="evidence" value="ECO:0007669"/>
    <property type="project" value="EnsemblFungi"/>
</dbReference>
<dbReference type="GO" id="GO:0006368">
    <property type="term" value="P:transcription elongation by RNA polymerase II"/>
    <property type="evidence" value="ECO:0007669"/>
    <property type="project" value="EnsemblFungi"/>
</dbReference>
<dbReference type="CDD" id="cd00074">
    <property type="entry name" value="HFD_H2A"/>
    <property type="match status" value="1"/>
</dbReference>
<dbReference type="FunFam" id="1.10.20.10:FF:000005">
    <property type="entry name" value="Histone H2A"/>
    <property type="match status" value="1"/>
</dbReference>
<dbReference type="Gene3D" id="1.10.20.10">
    <property type="entry name" value="Histone, subunit A"/>
    <property type="match status" value="1"/>
</dbReference>
<dbReference type="InterPro" id="IPR009072">
    <property type="entry name" value="Histone-fold"/>
</dbReference>
<dbReference type="InterPro" id="IPR002119">
    <property type="entry name" value="Histone_H2A"/>
</dbReference>
<dbReference type="InterPro" id="IPR007125">
    <property type="entry name" value="Histone_H2A/H2B/H3"/>
</dbReference>
<dbReference type="InterPro" id="IPR032454">
    <property type="entry name" value="Histone_H2A_C"/>
</dbReference>
<dbReference type="InterPro" id="IPR032458">
    <property type="entry name" value="Histone_H2A_CS"/>
</dbReference>
<dbReference type="PANTHER" id="PTHR23430">
    <property type="entry name" value="HISTONE H2A"/>
    <property type="match status" value="1"/>
</dbReference>
<dbReference type="Pfam" id="PF00125">
    <property type="entry name" value="Histone"/>
    <property type="match status" value="1"/>
</dbReference>
<dbReference type="Pfam" id="PF16211">
    <property type="entry name" value="Histone_H2A_C"/>
    <property type="match status" value="1"/>
</dbReference>
<dbReference type="PRINTS" id="PR00620">
    <property type="entry name" value="HISTONEH2A"/>
</dbReference>
<dbReference type="SMART" id="SM00414">
    <property type="entry name" value="H2A"/>
    <property type="match status" value="1"/>
</dbReference>
<dbReference type="SUPFAM" id="SSF47113">
    <property type="entry name" value="Histone-fold"/>
    <property type="match status" value="1"/>
</dbReference>
<dbReference type="PROSITE" id="PS00046">
    <property type="entry name" value="HISTONE_H2A"/>
    <property type="match status" value="1"/>
</dbReference>
<evidence type="ECO:0000250" key="1"/>
<evidence type="ECO:0000256" key="2">
    <source>
        <dbReference type="SAM" id="MobiDB-lite"/>
    </source>
</evidence>
<evidence type="ECO:0000305" key="3"/>
<keyword id="KW-0007">Acetylation</keyword>
<keyword id="KW-0010">Activator</keyword>
<keyword id="KW-0156">Chromatin regulator</keyword>
<keyword id="KW-0158">Chromosome</keyword>
<keyword id="KW-0238">DNA-binding</keyword>
<keyword id="KW-0544">Nucleosome core</keyword>
<keyword id="KW-0539">Nucleus</keyword>
<keyword id="KW-1185">Reference proteome</keyword>
<keyword id="KW-0804">Transcription</keyword>
<keyword id="KW-0805">Transcription regulation</keyword>
<sequence>MSDPRAKGGKGGAANAKNEPKKQTTQSARAGLQFPVGRIHRHLKSRTQNHVRIGAKAAVYTSAILEYLTAEVLELAGNASKDMRLKRITPRHLQLAIRGDEELDSMVRATIAGGGVLPHIHKTLIKAPSKKKALE</sequence>
<organism>
    <name type="scientific">Mycosarcoma maydis</name>
    <name type="common">Corn smut fungus</name>
    <name type="synonym">Ustilago maydis</name>
    <dbReference type="NCBI Taxonomy" id="5270"/>
    <lineage>
        <taxon>Eukaryota</taxon>
        <taxon>Fungi</taxon>
        <taxon>Dikarya</taxon>
        <taxon>Basidiomycota</taxon>
        <taxon>Ustilaginomycotina</taxon>
        <taxon>Ustilaginomycetes</taxon>
        <taxon>Ustilaginales</taxon>
        <taxon>Ustilaginaceae</taxon>
        <taxon>Mycosarcoma</taxon>
    </lineage>
</organism>
<feature type="chain" id="PRO_0000055338" description="Histone H2A.Z">
    <location>
        <begin position="1"/>
        <end position="135"/>
    </location>
</feature>
<feature type="region of interest" description="Disordered" evidence="2">
    <location>
        <begin position="1"/>
        <end position="33"/>
    </location>
</feature>
<feature type="modified residue" description="N6-acetyllysine" evidence="1">
    <location>
        <position position="10"/>
    </location>
</feature>
<comment type="function">
    <text evidence="1">Variant histone H2A which can replace H2A in some nucleosomes. Nucleosomes wrap and compact DNA into chromatin, limiting DNA accessibility to the cellular machineries which require DNA as a template. Histones thereby play a central role in transcription regulation, DNA repair, DNA replication and chromosomal stability. DNA accessibility is regulated via a complex set of post-translational modifications of histones, also called histone code, and nucleosome remodeling. This variant is enriched at promoters, it may keep them in a repressed state until the appropriate activation signal is received. Near telomeres, it may counteract gene silencing caused by the spread of heterochromatin proteins. Required for the RNA polymerase II and SPT15/TBP recruitment to the target genes. Involved in chromosome stability (By similarity).</text>
</comment>
<comment type="subunit">
    <text evidence="1">The nucleosome is a histone octamer containing two molecules each of H2A, H2B, H3 and H4 assembled in one H3-H4 heterotetramer and two H2A-H2B heterodimers. The octamer wraps approximately 147 bp of DNA. H2A or its variant H2A.Z forms a heterodimer with H2B. H2A.Z associates with the VPS72/SWC2 subunit of the SWR1 chromatin remodeling complex. Also interacts with RBP1/DNA-directed RNA polymerase II largest subunit (By similarity).</text>
</comment>
<comment type="subcellular location">
    <subcellularLocation>
        <location evidence="1">Nucleus</location>
    </subcellularLocation>
    <subcellularLocation>
        <location evidence="1">Chromosome</location>
    </subcellularLocation>
</comment>
<comment type="PTM">
    <text evidence="1">Acetylated once deposited into chromatin.</text>
</comment>
<comment type="similarity">
    <text evidence="3">Belongs to the histone H2A family.</text>
</comment>
<proteinExistence type="inferred from homology"/>
<name>H2AZ_MYCMD</name>
<reference key="1">
    <citation type="journal article" date="2006" name="Nature">
        <title>Insights from the genome of the biotrophic fungal plant pathogen Ustilago maydis.</title>
        <authorList>
            <person name="Kaemper J."/>
            <person name="Kahmann R."/>
            <person name="Boelker M."/>
            <person name="Ma L.-J."/>
            <person name="Brefort T."/>
            <person name="Saville B.J."/>
            <person name="Banuett F."/>
            <person name="Kronstad J.W."/>
            <person name="Gold S.E."/>
            <person name="Mueller O."/>
            <person name="Perlin M.H."/>
            <person name="Woesten H.A.B."/>
            <person name="de Vries R."/>
            <person name="Ruiz-Herrera J."/>
            <person name="Reynaga-Pena C.G."/>
            <person name="Snetselaar K."/>
            <person name="McCann M."/>
            <person name="Perez-Martin J."/>
            <person name="Feldbruegge M."/>
            <person name="Basse C.W."/>
            <person name="Steinberg G."/>
            <person name="Ibeas J.I."/>
            <person name="Holloman W."/>
            <person name="Guzman P."/>
            <person name="Farman M.L."/>
            <person name="Stajich J.E."/>
            <person name="Sentandreu R."/>
            <person name="Gonzalez-Prieto J.M."/>
            <person name="Kennell J.C."/>
            <person name="Molina L."/>
            <person name="Schirawski J."/>
            <person name="Mendoza-Mendoza A."/>
            <person name="Greilinger D."/>
            <person name="Muench K."/>
            <person name="Roessel N."/>
            <person name="Scherer M."/>
            <person name="Vranes M."/>
            <person name="Ladendorf O."/>
            <person name="Vincon V."/>
            <person name="Fuchs U."/>
            <person name="Sandrock B."/>
            <person name="Meng S."/>
            <person name="Ho E.C.H."/>
            <person name="Cahill M.J."/>
            <person name="Boyce K.J."/>
            <person name="Klose J."/>
            <person name="Klosterman S.J."/>
            <person name="Deelstra H.J."/>
            <person name="Ortiz-Castellanos L."/>
            <person name="Li W."/>
            <person name="Sanchez-Alonso P."/>
            <person name="Schreier P.H."/>
            <person name="Haeuser-Hahn I."/>
            <person name="Vaupel M."/>
            <person name="Koopmann E."/>
            <person name="Friedrich G."/>
            <person name="Voss H."/>
            <person name="Schlueter T."/>
            <person name="Margolis J."/>
            <person name="Platt D."/>
            <person name="Swimmer C."/>
            <person name="Gnirke A."/>
            <person name="Chen F."/>
            <person name="Vysotskaia V."/>
            <person name="Mannhaupt G."/>
            <person name="Gueldener U."/>
            <person name="Muensterkoetter M."/>
            <person name="Haase D."/>
            <person name="Oesterheld M."/>
            <person name="Mewes H.-W."/>
            <person name="Mauceli E.W."/>
            <person name="DeCaprio D."/>
            <person name="Wade C.M."/>
            <person name="Butler J."/>
            <person name="Young S.K."/>
            <person name="Jaffe D.B."/>
            <person name="Calvo S.E."/>
            <person name="Nusbaum C."/>
            <person name="Galagan J.E."/>
            <person name="Birren B.W."/>
        </authorList>
    </citation>
    <scope>NUCLEOTIDE SEQUENCE [LARGE SCALE GENOMIC DNA]</scope>
    <source>
        <strain>DSM 14603 / FGSC 9021 / UM521</strain>
    </source>
</reference>
<reference key="2">
    <citation type="submission" date="2014-09" db="EMBL/GenBank/DDBJ databases">
        <authorList>
            <person name="Gueldener U."/>
            <person name="Muensterkoetter M."/>
            <person name="Walter M.C."/>
            <person name="Mannhaupt G."/>
            <person name="Kahmann R."/>
        </authorList>
    </citation>
    <scope>GENOME REANNOTATION</scope>
    <source>
        <strain>DSM 14603 / FGSC 9021 / UM521</strain>
    </source>
</reference>
<protein>
    <recommendedName>
        <fullName>Histone H2A.Z</fullName>
    </recommendedName>
</protein>
<accession>Q4PHE4</accession>
<accession>A0A0D1CGI5</accession>